<accession>B7JKC7</accession>
<sequence>MKTNDIRELTTAEIETKVKALKEELFNLRFQLATGQLENPTRIREVRKAIARMKTVVREREIGINR</sequence>
<organism>
    <name type="scientific">Bacillus cereus (strain AH820)</name>
    <dbReference type="NCBI Taxonomy" id="405535"/>
    <lineage>
        <taxon>Bacteria</taxon>
        <taxon>Bacillati</taxon>
        <taxon>Bacillota</taxon>
        <taxon>Bacilli</taxon>
        <taxon>Bacillales</taxon>
        <taxon>Bacillaceae</taxon>
        <taxon>Bacillus</taxon>
        <taxon>Bacillus cereus group</taxon>
    </lineage>
</organism>
<comment type="similarity">
    <text evidence="1">Belongs to the universal ribosomal protein uL29 family.</text>
</comment>
<name>RL29_BACC0</name>
<dbReference type="EMBL" id="CP001283">
    <property type="protein sequence ID" value="ACK91137.1"/>
    <property type="molecule type" value="Genomic_DNA"/>
</dbReference>
<dbReference type="RefSeq" id="WP_000855718.1">
    <property type="nucleotide sequence ID" value="NC_011773.1"/>
</dbReference>
<dbReference type="SMR" id="B7JKC7"/>
<dbReference type="GeneID" id="93010935"/>
<dbReference type="KEGG" id="bcu:BCAH820_0130"/>
<dbReference type="HOGENOM" id="CLU_158491_5_2_9"/>
<dbReference type="Proteomes" id="UP000001363">
    <property type="component" value="Chromosome"/>
</dbReference>
<dbReference type="GO" id="GO:0022625">
    <property type="term" value="C:cytosolic large ribosomal subunit"/>
    <property type="evidence" value="ECO:0007669"/>
    <property type="project" value="TreeGrafter"/>
</dbReference>
<dbReference type="GO" id="GO:0003735">
    <property type="term" value="F:structural constituent of ribosome"/>
    <property type="evidence" value="ECO:0007669"/>
    <property type="project" value="InterPro"/>
</dbReference>
<dbReference type="GO" id="GO:0006412">
    <property type="term" value="P:translation"/>
    <property type="evidence" value="ECO:0007669"/>
    <property type="project" value="UniProtKB-UniRule"/>
</dbReference>
<dbReference type="CDD" id="cd00427">
    <property type="entry name" value="Ribosomal_L29_HIP"/>
    <property type="match status" value="1"/>
</dbReference>
<dbReference type="FunFam" id="1.10.287.310:FF:000001">
    <property type="entry name" value="50S ribosomal protein L29"/>
    <property type="match status" value="1"/>
</dbReference>
<dbReference type="Gene3D" id="1.10.287.310">
    <property type="match status" value="1"/>
</dbReference>
<dbReference type="HAMAP" id="MF_00374">
    <property type="entry name" value="Ribosomal_uL29"/>
    <property type="match status" value="1"/>
</dbReference>
<dbReference type="InterPro" id="IPR050063">
    <property type="entry name" value="Ribosomal_protein_uL29"/>
</dbReference>
<dbReference type="InterPro" id="IPR001854">
    <property type="entry name" value="Ribosomal_uL29"/>
</dbReference>
<dbReference type="InterPro" id="IPR018254">
    <property type="entry name" value="Ribosomal_uL29_CS"/>
</dbReference>
<dbReference type="InterPro" id="IPR036049">
    <property type="entry name" value="Ribosomal_uL29_sf"/>
</dbReference>
<dbReference type="NCBIfam" id="TIGR00012">
    <property type="entry name" value="L29"/>
    <property type="match status" value="1"/>
</dbReference>
<dbReference type="PANTHER" id="PTHR10916">
    <property type="entry name" value="60S RIBOSOMAL PROTEIN L35/50S RIBOSOMAL PROTEIN L29"/>
    <property type="match status" value="1"/>
</dbReference>
<dbReference type="PANTHER" id="PTHR10916:SF0">
    <property type="entry name" value="LARGE RIBOSOMAL SUBUNIT PROTEIN UL29C"/>
    <property type="match status" value="1"/>
</dbReference>
<dbReference type="Pfam" id="PF00831">
    <property type="entry name" value="Ribosomal_L29"/>
    <property type="match status" value="1"/>
</dbReference>
<dbReference type="SUPFAM" id="SSF46561">
    <property type="entry name" value="Ribosomal protein L29 (L29p)"/>
    <property type="match status" value="1"/>
</dbReference>
<dbReference type="PROSITE" id="PS00579">
    <property type="entry name" value="RIBOSOMAL_L29"/>
    <property type="match status" value="1"/>
</dbReference>
<feature type="chain" id="PRO_1000121728" description="Large ribosomal subunit protein uL29">
    <location>
        <begin position="1"/>
        <end position="66"/>
    </location>
</feature>
<reference key="1">
    <citation type="submission" date="2008-10" db="EMBL/GenBank/DDBJ databases">
        <title>Genome sequence of Bacillus cereus AH820.</title>
        <authorList>
            <person name="Dodson R.J."/>
            <person name="Durkin A.S."/>
            <person name="Rosovitz M.J."/>
            <person name="Rasko D.A."/>
            <person name="Hoffmaster A."/>
            <person name="Ravel J."/>
            <person name="Sutton G."/>
        </authorList>
    </citation>
    <scope>NUCLEOTIDE SEQUENCE [LARGE SCALE GENOMIC DNA]</scope>
    <source>
        <strain>AH820</strain>
    </source>
</reference>
<proteinExistence type="inferred from homology"/>
<keyword id="KW-0687">Ribonucleoprotein</keyword>
<keyword id="KW-0689">Ribosomal protein</keyword>
<evidence type="ECO:0000255" key="1">
    <source>
        <dbReference type="HAMAP-Rule" id="MF_00374"/>
    </source>
</evidence>
<evidence type="ECO:0000305" key="2"/>
<protein>
    <recommendedName>
        <fullName evidence="1">Large ribosomal subunit protein uL29</fullName>
    </recommendedName>
    <alternativeName>
        <fullName evidence="2">50S ribosomal protein L29</fullName>
    </alternativeName>
</protein>
<gene>
    <name evidence="1" type="primary">rpmC</name>
    <name type="ordered locus">BCAH820_0130</name>
</gene>